<feature type="chain" id="PRO_0000202357" description="Uncharacterized protein TP_0932">
    <location>
        <begin position="1"/>
        <end position="30"/>
    </location>
</feature>
<organism>
    <name type="scientific">Treponema pallidum (strain Nichols)</name>
    <dbReference type="NCBI Taxonomy" id="243276"/>
    <lineage>
        <taxon>Bacteria</taxon>
        <taxon>Pseudomonadati</taxon>
        <taxon>Spirochaetota</taxon>
        <taxon>Spirochaetia</taxon>
        <taxon>Spirochaetales</taxon>
        <taxon>Treponemataceae</taxon>
        <taxon>Treponema</taxon>
    </lineage>
</organism>
<sequence>MPVCTSRSLQGGKVDTHFPLHVLHSVACDV</sequence>
<name>Y932_TREPA</name>
<keyword id="KW-1185">Reference proteome</keyword>
<gene>
    <name type="ordered locus">TP_0932</name>
</gene>
<proteinExistence type="predicted"/>
<accession>O83902</accession>
<reference key="1">
    <citation type="journal article" date="1998" name="Science">
        <title>Complete genome sequence of Treponema pallidum, the syphilis spirochete.</title>
        <authorList>
            <person name="Fraser C.M."/>
            <person name="Norris S.J."/>
            <person name="Weinstock G.M."/>
            <person name="White O."/>
            <person name="Sutton G.G."/>
            <person name="Dodson R.J."/>
            <person name="Gwinn M.L."/>
            <person name="Hickey E.K."/>
            <person name="Clayton R.A."/>
            <person name="Ketchum K.A."/>
            <person name="Sodergren E."/>
            <person name="Hardham J.M."/>
            <person name="McLeod M.P."/>
            <person name="Salzberg S.L."/>
            <person name="Peterson J.D."/>
            <person name="Khalak H.G."/>
            <person name="Richardson D.L."/>
            <person name="Howell J.K."/>
            <person name="Chidambaram M."/>
            <person name="Utterback T.R."/>
            <person name="McDonald L.A."/>
            <person name="Artiach P."/>
            <person name="Bowman C."/>
            <person name="Cotton M.D."/>
            <person name="Fujii C."/>
            <person name="Garland S.A."/>
            <person name="Hatch B."/>
            <person name="Horst K."/>
            <person name="Roberts K.M."/>
            <person name="Sandusky M."/>
            <person name="Weidman J.F."/>
            <person name="Smith H.O."/>
            <person name="Venter J.C."/>
        </authorList>
    </citation>
    <scope>NUCLEOTIDE SEQUENCE [LARGE SCALE GENOMIC DNA]</scope>
    <source>
        <strain>Nichols</strain>
    </source>
</reference>
<protein>
    <recommendedName>
        <fullName>Uncharacterized protein TP_0932</fullName>
    </recommendedName>
</protein>
<dbReference type="EMBL" id="AE000520">
    <property type="protein sequence ID" value="AAC65890.1"/>
    <property type="molecule type" value="Genomic_DNA"/>
</dbReference>
<dbReference type="PIR" id="E71264">
    <property type="entry name" value="E71264"/>
</dbReference>
<dbReference type="IntAct" id="O83902">
    <property type="interactions" value="13"/>
</dbReference>
<dbReference type="EnsemblBacteria" id="AAC65890">
    <property type="protein sequence ID" value="AAC65890"/>
    <property type="gene ID" value="TP_0932"/>
</dbReference>
<dbReference type="KEGG" id="tpa:TP_0932"/>
<dbReference type="HOGENOM" id="CLU_3405988_0_0_12"/>
<dbReference type="Proteomes" id="UP000000811">
    <property type="component" value="Chromosome"/>
</dbReference>